<name>GRPE_PSEE4</name>
<feature type="chain" id="PRO_1000053621" description="Protein GrpE">
    <location>
        <begin position="1"/>
        <end position="184"/>
    </location>
</feature>
<feature type="region of interest" description="Disordered" evidence="2">
    <location>
        <begin position="1"/>
        <end position="24"/>
    </location>
</feature>
<protein>
    <recommendedName>
        <fullName evidence="1">Protein GrpE</fullName>
    </recommendedName>
    <alternativeName>
        <fullName evidence="1">HSP-70 cofactor</fullName>
    </alternativeName>
</protein>
<keyword id="KW-0143">Chaperone</keyword>
<keyword id="KW-0963">Cytoplasm</keyword>
<keyword id="KW-0346">Stress response</keyword>
<gene>
    <name evidence="1" type="primary">grpE</name>
    <name type="ordered locus">PSEEN0777</name>
</gene>
<sequence>MADEQLDEKNLNSEEAGAVNGDARVQELEEQLAAAKDQSLRAAADLQNIRRRAEQDVEKAHKFALEKFAGDLLPIIDSLERGLELSNADDDTIKPMREGIELTLKMFHDTLKRYNLEALEPHGEPFNAEHHQAMAMQESADVEPNSVLKVFQKGYLLNGRLLRPAMVVVSKSPAPAQPSIDEKA</sequence>
<evidence type="ECO:0000255" key="1">
    <source>
        <dbReference type="HAMAP-Rule" id="MF_01151"/>
    </source>
</evidence>
<evidence type="ECO:0000256" key="2">
    <source>
        <dbReference type="SAM" id="MobiDB-lite"/>
    </source>
</evidence>
<reference key="1">
    <citation type="journal article" date="2006" name="Nat. Biotechnol.">
        <title>Complete genome sequence of the entomopathogenic and metabolically versatile soil bacterium Pseudomonas entomophila.</title>
        <authorList>
            <person name="Vodovar N."/>
            <person name="Vallenet D."/>
            <person name="Cruveiller S."/>
            <person name="Rouy Z."/>
            <person name="Barbe V."/>
            <person name="Acosta C."/>
            <person name="Cattolico L."/>
            <person name="Jubin C."/>
            <person name="Lajus A."/>
            <person name="Segurens B."/>
            <person name="Vacherie B."/>
            <person name="Wincker P."/>
            <person name="Weissenbach J."/>
            <person name="Lemaitre B."/>
            <person name="Medigue C."/>
            <person name="Boccard F."/>
        </authorList>
    </citation>
    <scope>NUCLEOTIDE SEQUENCE [LARGE SCALE GENOMIC DNA]</scope>
    <source>
        <strain>L48</strain>
    </source>
</reference>
<proteinExistence type="inferred from homology"/>
<organism>
    <name type="scientific">Pseudomonas entomophila (strain L48)</name>
    <dbReference type="NCBI Taxonomy" id="384676"/>
    <lineage>
        <taxon>Bacteria</taxon>
        <taxon>Pseudomonadati</taxon>
        <taxon>Pseudomonadota</taxon>
        <taxon>Gammaproteobacteria</taxon>
        <taxon>Pseudomonadales</taxon>
        <taxon>Pseudomonadaceae</taxon>
        <taxon>Pseudomonas</taxon>
    </lineage>
</organism>
<comment type="function">
    <text evidence="1">Participates actively in the response to hyperosmotic and heat shock by preventing the aggregation of stress-denatured proteins, in association with DnaK and GrpE. It is the nucleotide exchange factor for DnaK and may function as a thermosensor. Unfolded proteins bind initially to DnaJ; upon interaction with the DnaJ-bound protein, DnaK hydrolyzes its bound ATP, resulting in the formation of a stable complex. GrpE releases ADP from DnaK; ATP binding to DnaK triggers the release of the substrate protein, thus completing the reaction cycle. Several rounds of ATP-dependent interactions between DnaJ, DnaK and GrpE are required for fully efficient folding.</text>
</comment>
<comment type="subunit">
    <text evidence="1">Homodimer.</text>
</comment>
<comment type="subcellular location">
    <subcellularLocation>
        <location evidence="1">Cytoplasm</location>
    </subcellularLocation>
</comment>
<comment type="similarity">
    <text evidence="1">Belongs to the GrpE family.</text>
</comment>
<dbReference type="EMBL" id="CT573326">
    <property type="protein sequence ID" value="CAK13694.1"/>
    <property type="molecule type" value="Genomic_DNA"/>
</dbReference>
<dbReference type="RefSeq" id="WP_011532125.1">
    <property type="nucleotide sequence ID" value="NC_008027.1"/>
</dbReference>
<dbReference type="SMR" id="Q1IF60"/>
<dbReference type="STRING" id="384676.PSEEN0777"/>
<dbReference type="GeneID" id="32804084"/>
<dbReference type="KEGG" id="pen:PSEEN0777"/>
<dbReference type="eggNOG" id="COG0576">
    <property type="taxonomic scope" value="Bacteria"/>
</dbReference>
<dbReference type="HOGENOM" id="CLU_057217_6_0_6"/>
<dbReference type="OrthoDB" id="9789811at2"/>
<dbReference type="Proteomes" id="UP000000658">
    <property type="component" value="Chromosome"/>
</dbReference>
<dbReference type="GO" id="GO:0005829">
    <property type="term" value="C:cytosol"/>
    <property type="evidence" value="ECO:0007669"/>
    <property type="project" value="TreeGrafter"/>
</dbReference>
<dbReference type="GO" id="GO:0000774">
    <property type="term" value="F:adenyl-nucleotide exchange factor activity"/>
    <property type="evidence" value="ECO:0007669"/>
    <property type="project" value="InterPro"/>
</dbReference>
<dbReference type="GO" id="GO:0042803">
    <property type="term" value="F:protein homodimerization activity"/>
    <property type="evidence" value="ECO:0007669"/>
    <property type="project" value="InterPro"/>
</dbReference>
<dbReference type="GO" id="GO:0051087">
    <property type="term" value="F:protein-folding chaperone binding"/>
    <property type="evidence" value="ECO:0007669"/>
    <property type="project" value="InterPro"/>
</dbReference>
<dbReference type="GO" id="GO:0051082">
    <property type="term" value="F:unfolded protein binding"/>
    <property type="evidence" value="ECO:0007669"/>
    <property type="project" value="TreeGrafter"/>
</dbReference>
<dbReference type="GO" id="GO:0006457">
    <property type="term" value="P:protein folding"/>
    <property type="evidence" value="ECO:0007669"/>
    <property type="project" value="InterPro"/>
</dbReference>
<dbReference type="CDD" id="cd00446">
    <property type="entry name" value="GrpE"/>
    <property type="match status" value="1"/>
</dbReference>
<dbReference type="FunFam" id="2.30.22.10:FF:000001">
    <property type="entry name" value="Protein GrpE"/>
    <property type="match status" value="1"/>
</dbReference>
<dbReference type="Gene3D" id="3.90.20.20">
    <property type="match status" value="1"/>
</dbReference>
<dbReference type="Gene3D" id="2.30.22.10">
    <property type="entry name" value="Head domain of nucleotide exchange factor GrpE"/>
    <property type="match status" value="1"/>
</dbReference>
<dbReference type="HAMAP" id="MF_01151">
    <property type="entry name" value="GrpE"/>
    <property type="match status" value="1"/>
</dbReference>
<dbReference type="InterPro" id="IPR000740">
    <property type="entry name" value="GrpE"/>
</dbReference>
<dbReference type="InterPro" id="IPR013805">
    <property type="entry name" value="GrpE_coiled_coil"/>
</dbReference>
<dbReference type="InterPro" id="IPR009012">
    <property type="entry name" value="GrpE_head"/>
</dbReference>
<dbReference type="NCBIfam" id="NF010737">
    <property type="entry name" value="PRK14139.1"/>
    <property type="match status" value="1"/>
</dbReference>
<dbReference type="NCBIfam" id="NF010738">
    <property type="entry name" value="PRK14140.1"/>
    <property type="match status" value="1"/>
</dbReference>
<dbReference type="NCBIfam" id="NF010748">
    <property type="entry name" value="PRK14150.1"/>
    <property type="match status" value="1"/>
</dbReference>
<dbReference type="NCBIfam" id="NF010749">
    <property type="entry name" value="PRK14151.1"/>
    <property type="match status" value="1"/>
</dbReference>
<dbReference type="PANTHER" id="PTHR21237">
    <property type="entry name" value="GRPE PROTEIN"/>
    <property type="match status" value="1"/>
</dbReference>
<dbReference type="PANTHER" id="PTHR21237:SF23">
    <property type="entry name" value="GRPE PROTEIN HOMOLOG, MITOCHONDRIAL"/>
    <property type="match status" value="1"/>
</dbReference>
<dbReference type="Pfam" id="PF01025">
    <property type="entry name" value="GrpE"/>
    <property type="match status" value="1"/>
</dbReference>
<dbReference type="PRINTS" id="PR00773">
    <property type="entry name" value="GRPEPROTEIN"/>
</dbReference>
<dbReference type="SUPFAM" id="SSF58014">
    <property type="entry name" value="Coiled-coil domain of nucleotide exchange factor GrpE"/>
    <property type="match status" value="1"/>
</dbReference>
<dbReference type="SUPFAM" id="SSF51064">
    <property type="entry name" value="Head domain of nucleotide exchange factor GrpE"/>
    <property type="match status" value="1"/>
</dbReference>
<dbReference type="PROSITE" id="PS01071">
    <property type="entry name" value="GRPE"/>
    <property type="match status" value="1"/>
</dbReference>
<accession>Q1IF60</accession>